<comment type="function">
    <text evidence="3">Component of the cytochrome c oxidase, the last enzyme in the mitochondrial electron transport chain which drives oxidative phosphorylation. The respiratory chain contains 3 multisubunit complexes succinate dehydrogenase (complex II, CII), ubiquinol-cytochrome c oxidoreductase (cytochrome b-c1 complex, complex III, CIII) and cytochrome c oxidase (complex IV, CIV), that cooperate to transfer electrons derived from NADH and succinate to molecular oxygen, creating an electrochemical gradient over the inner membrane that drives transmembrane transport and the ATP synthase. Cytochrome c oxidase is the component of the respiratory chain that catalyzes the reduction of oxygen to water. Electrons originating from reduced cytochrome c in the intermembrane space (IMS) are transferred via the dinuclear copper A center (CU(A)) of subunit 2 and heme A of subunit 1 to the active site in subunit 1, a binuclear center (BNC) formed by heme A3 and copper B (CU(B)). The BNC reduces molecular oxygen to 2 water molecules using 4 electrons from cytochrome c in the IMS and 4 protons from the mitochondrial matrix.</text>
</comment>
<comment type="catalytic activity">
    <reaction evidence="3">
        <text>4 Fe(II)-[cytochrome c] + O2 + 8 H(+)(in) = 4 Fe(III)-[cytochrome c] + 2 H2O + 4 H(+)(out)</text>
        <dbReference type="Rhea" id="RHEA:11436"/>
        <dbReference type="Rhea" id="RHEA-COMP:10350"/>
        <dbReference type="Rhea" id="RHEA-COMP:14399"/>
        <dbReference type="ChEBI" id="CHEBI:15377"/>
        <dbReference type="ChEBI" id="CHEBI:15378"/>
        <dbReference type="ChEBI" id="CHEBI:15379"/>
        <dbReference type="ChEBI" id="CHEBI:29033"/>
        <dbReference type="ChEBI" id="CHEBI:29034"/>
        <dbReference type="EC" id="7.1.1.9"/>
    </reaction>
    <physiologicalReaction direction="left-to-right" evidence="3">
        <dbReference type="Rhea" id="RHEA:11437"/>
    </physiologicalReaction>
</comment>
<comment type="cofactor">
    <cofactor evidence="4">
        <name>Cu cation</name>
        <dbReference type="ChEBI" id="CHEBI:23378"/>
    </cofactor>
    <text evidence="4">Binds a dinuclear copper A center per subunit.</text>
</comment>
<comment type="subunit">
    <text evidence="1 4">Component of the cytochrome c oxidase (complex IV, CIV), a multisubunit enzyme composed of 14 subunits. The complex is composed of a catalytic core of 3 subunits MT-CO1, MT-CO2 and MT-CO3, encoded in the mitochondrial DNA, and 11 supernumerary subunits COX4I, COX5A, COX5B, COX6A, COX6B, COX6C, COX7A, COX7B, COX7C, COX8 and NDUFA4, which are encoded in the nuclear genome. The complex exists as a monomer or a dimer and forms supercomplexes (SCs) in the inner mitochondrial membrane with NADH-ubiquinone oxidoreductase (complex I, CI) and ubiquinol-cytochrome c oxidoreductase (cytochrome b-c1 complex, complex III, CIII), resulting in different assemblies (supercomplex SCI(1)III(2)IV(1) and megacomplex MCI(2)III(2)IV(2)) (By similarity). Found in a complex with TMEM177, COA6, COX18, COX20, SCO1 and SCO2. Interacts with TMEM177 in a COX20-dependent manner. Interacts with COX20. Interacts with COX16 (By similarity).</text>
</comment>
<comment type="subcellular location">
    <subcellularLocation>
        <location evidence="4">Mitochondrion inner membrane</location>
        <topology evidence="4">Multi-pass membrane protein</topology>
    </subcellularLocation>
</comment>
<comment type="similarity">
    <text evidence="5">Belongs to the cytochrome c oxidase subunit 2 family.</text>
</comment>
<organism>
    <name type="scientific">Bos javanicus</name>
    <name type="common">Wild banteng</name>
    <dbReference type="NCBI Taxonomy" id="9906"/>
    <lineage>
        <taxon>Eukaryota</taxon>
        <taxon>Metazoa</taxon>
        <taxon>Chordata</taxon>
        <taxon>Craniata</taxon>
        <taxon>Vertebrata</taxon>
        <taxon>Euteleostomi</taxon>
        <taxon>Mammalia</taxon>
        <taxon>Eutheria</taxon>
        <taxon>Laurasiatheria</taxon>
        <taxon>Artiodactyla</taxon>
        <taxon>Ruminantia</taxon>
        <taxon>Pecora</taxon>
        <taxon>Bovidae</taxon>
        <taxon>Bovinae</taxon>
        <taxon>Bos</taxon>
    </lineage>
</organism>
<gene>
    <name type="primary">MT-CO2</name>
    <name type="synonym">COII</name>
    <name type="synonym">COX2</name>
    <name type="synonym">COXII</name>
    <name type="synonym">MTCO2</name>
</gene>
<name>COX2_BOSJA</name>
<protein>
    <recommendedName>
        <fullName>Cytochrome c oxidase subunit 2</fullName>
        <ecNumber>7.1.1.9</ecNumber>
    </recommendedName>
    <alternativeName>
        <fullName>Cytochrome c oxidase polypeptide II</fullName>
    </alternativeName>
</protein>
<evidence type="ECO:0000250" key="1">
    <source>
        <dbReference type="UniProtKB" id="P00403"/>
    </source>
</evidence>
<evidence type="ECO:0000250" key="2">
    <source>
        <dbReference type="UniProtKB" id="P00406"/>
    </source>
</evidence>
<evidence type="ECO:0000250" key="3">
    <source>
        <dbReference type="UniProtKB" id="P00410"/>
    </source>
</evidence>
<evidence type="ECO:0000250" key="4">
    <source>
        <dbReference type="UniProtKB" id="P68530"/>
    </source>
</evidence>
<evidence type="ECO:0000305" key="5"/>
<reference key="1">
    <citation type="journal article" date="1995" name="J. Mol. Evol.">
        <title>Mammalian mitochondrial DNA evolution: a comparison of the cytochrome b and cytochrome c oxidase II genes.</title>
        <authorList>
            <person name="Honeycutt R.L."/>
            <person name="Nedbal M.A."/>
            <person name="Adkins R.M."/>
            <person name="Janecek L.L."/>
        </authorList>
    </citation>
    <scope>NUCLEOTIDE SEQUENCE [GENOMIC DNA]</scope>
</reference>
<proteinExistence type="inferred from homology"/>
<dbReference type="EC" id="7.1.1.9"/>
<dbReference type="EMBL" id="U18821">
    <property type="protein sequence ID" value="AAA75608.1"/>
    <property type="molecule type" value="Genomic_DNA"/>
</dbReference>
<dbReference type="SMR" id="P68294"/>
<dbReference type="GO" id="GO:0005743">
    <property type="term" value="C:mitochondrial inner membrane"/>
    <property type="evidence" value="ECO:0007669"/>
    <property type="project" value="UniProtKB-SubCell"/>
</dbReference>
<dbReference type="GO" id="GO:0045277">
    <property type="term" value="C:respiratory chain complex IV"/>
    <property type="evidence" value="ECO:0000250"/>
    <property type="project" value="UniProtKB"/>
</dbReference>
<dbReference type="GO" id="GO:0005507">
    <property type="term" value="F:copper ion binding"/>
    <property type="evidence" value="ECO:0007669"/>
    <property type="project" value="InterPro"/>
</dbReference>
<dbReference type="GO" id="GO:0004129">
    <property type="term" value="F:cytochrome-c oxidase activity"/>
    <property type="evidence" value="ECO:0007669"/>
    <property type="project" value="UniProtKB-EC"/>
</dbReference>
<dbReference type="GO" id="GO:0042773">
    <property type="term" value="P:ATP synthesis coupled electron transport"/>
    <property type="evidence" value="ECO:0007669"/>
    <property type="project" value="TreeGrafter"/>
</dbReference>
<dbReference type="CDD" id="cd13912">
    <property type="entry name" value="CcO_II_C"/>
    <property type="match status" value="1"/>
</dbReference>
<dbReference type="FunFam" id="1.10.287.90:FF:000001">
    <property type="entry name" value="Cytochrome c oxidase subunit 2"/>
    <property type="match status" value="1"/>
</dbReference>
<dbReference type="FunFam" id="2.60.40.420:FF:000001">
    <property type="entry name" value="Cytochrome c oxidase subunit 2"/>
    <property type="match status" value="1"/>
</dbReference>
<dbReference type="Gene3D" id="1.10.287.90">
    <property type="match status" value="1"/>
</dbReference>
<dbReference type="Gene3D" id="2.60.40.420">
    <property type="entry name" value="Cupredoxins - blue copper proteins"/>
    <property type="match status" value="1"/>
</dbReference>
<dbReference type="InterPro" id="IPR045187">
    <property type="entry name" value="CcO_II"/>
</dbReference>
<dbReference type="InterPro" id="IPR002429">
    <property type="entry name" value="CcO_II-like_C"/>
</dbReference>
<dbReference type="InterPro" id="IPR034210">
    <property type="entry name" value="CcO_II_C"/>
</dbReference>
<dbReference type="InterPro" id="IPR001505">
    <property type="entry name" value="Copper_CuA"/>
</dbReference>
<dbReference type="InterPro" id="IPR008972">
    <property type="entry name" value="Cupredoxin"/>
</dbReference>
<dbReference type="InterPro" id="IPR014222">
    <property type="entry name" value="Cyt_c_oxidase_su2"/>
</dbReference>
<dbReference type="InterPro" id="IPR011759">
    <property type="entry name" value="Cyt_c_oxidase_su2_TM_dom"/>
</dbReference>
<dbReference type="InterPro" id="IPR036257">
    <property type="entry name" value="Cyt_c_oxidase_su2_TM_sf"/>
</dbReference>
<dbReference type="NCBIfam" id="TIGR02866">
    <property type="entry name" value="CoxB"/>
    <property type="match status" value="1"/>
</dbReference>
<dbReference type="PANTHER" id="PTHR22888:SF9">
    <property type="entry name" value="CYTOCHROME C OXIDASE SUBUNIT 2"/>
    <property type="match status" value="1"/>
</dbReference>
<dbReference type="PANTHER" id="PTHR22888">
    <property type="entry name" value="CYTOCHROME C OXIDASE, SUBUNIT II"/>
    <property type="match status" value="1"/>
</dbReference>
<dbReference type="Pfam" id="PF00116">
    <property type="entry name" value="COX2"/>
    <property type="match status" value="1"/>
</dbReference>
<dbReference type="Pfam" id="PF02790">
    <property type="entry name" value="COX2_TM"/>
    <property type="match status" value="1"/>
</dbReference>
<dbReference type="PRINTS" id="PR01166">
    <property type="entry name" value="CYCOXIDASEII"/>
</dbReference>
<dbReference type="SUPFAM" id="SSF49503">
    <property type="entry name" value="Cupredoxins"/>
    <property type="match status" value="1"/>
</dbReference>
<dbReference type="SUPFAM" id="SSF81464">
    <property type="entry name" value="Cytochrome c oxidase subunit II-like, transmembrane region"/>
    <property type="match status" value="1"/>
</dbReference>
<dbReference type="PROSITE" id="PS00078">
    <property type="entry name" value="COX2"/>
    <property type="match status" value="1"/>
</dbReference>
<dbReference type="PROSITE" id="PS50857">
    <property type="entry name" value="COX2_CUA"/>
    <property type="match status" value="1"/>
</dbReference>
<dbReference type="PROSITE" id="PS50999">
    <property type="entry name" value="COX2_TM"/>
    <property type="match status" value="1"/>
</dbReference>
<geneLocation type="mitochondrion"/>
<keyword id="KW-0186">Copper</keyword>
<keyword id="KW-0249">Electron transport</keyword>
<keyword id="KW-0460">Magnesium</keyword>
<keyword id="KW-0472">Membrane</keyword>
<keyword id="KW-0479">Metal-binding</keyword>
<keyword id="KW-0496">Mitochondrion</keyword>
<keyword id="KW-0999">Mitochondrion inner membrane</keyword>
<keyword id="KW-0597">Phosphoprotein</keyword>
<keyword id="KW-0679">Respiratory chain</keyword>
<keyword id="KW-1278">Translocase</keyword>
<keyword id="KW-0812">Transmembrane</keyword>
<keyword id="KW-1133">Transmembrane helix</keyword>
<keyword id="KW-0813">Transport</keyword>
<accession>P68294</accession>
<accession>P50674</accession>
<sequence>MAYPMQLGFQDATSPIMEELLHFHDHTLMIVFLISSLVLYIISLMLTTKLTHTSTMDAQEVETIWTILPAIILILIALPSLRILYMMDEINNPSLTVKTMGHQWYWSYEYTDYEDLSFDSYMIPTSELKPGELRLLEVDNRVVLPMEMTIRMLVSSEDVLHSWAVPSLGLKTDAIPGRLNQTTLMSTRPGLYYGQCSEICGSNHSFMPIVLELVPLKYFEKWSASML</sequence>
<feature type="chain" id="PRO_0000183514" description="Cytochrome c oxidase subunit 2">
    <location>
        <begin position="1"/>
        <end position="227"/>
    </location>
</feature>
<feature type="topological domain" description="Mitochondrial intermembrane" evidence="4">
    <location>
        <begin position="1"/>
        <end position="14"/>
    </location>
</feature>
<feature type="transmembrane region" description="Helical; Name=I" evidence="4">
    <location>
        <begin position="15"/>
        <end position="45"/>
    </location>
</feature>
<feature type="topological domain" description="Mitochondrial matrix" evidence="4">
    <location>
        <begin position="46"/>
        <end position="59"/>
    </location>
</feature>
<feature type="transmembrane region" description="Helical; Name=II" evidence="4">
    <location>
        <begin position="60"/>
        <end position="87"/>
    </location>
</feature>
<feature type="topological domain" description="Mitochondrial intermembrane" evidence="4">
    <location>
        <begin position="88"/>
        <end position="227"/>
    </location>
</feature>
<feature type="binding site" evidence="4">
    <location>
        <position position="161"/>
    </location>
    <ligand>
        <name>Cu cation</name>
        <dbReference type="ChEBI" id="CHEBI:23378"/>
        <label>A1</label>
    </ligand>
</feature>
<feature type="binding site" evidence="4">
    <location>
        <position position="196"/>
    </location>
    <ligand>
        <name>Cu cation</name>
        <dbReference type="ChEBI" id="CHEBI:23378"/>
        <label>A1</label>
    </ligand>
</feature>
<feature type="binding site" evidence="4">
    <location>
        <position position="196"/>
    </location>
    <ligand>
        <name>Cu cation</name>
        <dbReference type="ChEBI" id="CHEBI:23378"/>
        <label>A2</label>
    </ligand>
</feature>
<feature type="binding site" evidence="4">
    <location>
        <position position="198"/>
    </location>
    <ligand>
        <name>Cu cation</name>
        <dbReference type="ChEBI" id="CHEBI:23378"/>
        <label>A2</label>
    </ligand>
</feature>
<feature type="binding site" evidence="4">
    <location>
        <position position="198"/>
    </location>
    <ligand>
        <name>Mg(2+)</name>
        <dbReference type="ChEBI" id="CHEBI:18420"/>
        <note>ligand shared with MT-CO1</note>
    </ligand>
</feature>
<feature type="binding site" evidence="4">
    <location>
        <position position="200"/>
    </location>
    <ligand>
        <name>Cu cation</name>
        <dbReference type="ChEBI" id="CHEBI:23378"/>
        <label>A1</label>
    </ligand>
</feature>
<feature type="binding site" evidence="4">
    <location>
        <position position="200"/>
    </location>
    <ligand>
        <name>Cu cation</name>
        <dbReference type="ChEBI" id="CHEBI:23378"/>
        <label>A2</label>
    </ligand>
</feature>
<feature type="binding site" evidence="4">
    <location>
        <position position="204"/>
    </location>
    <ligand>
        <name>Cu cation</name>
        <dbReference type="ChEBI" id="CHEBI:23378"/>
        <label>A2</label>
    </ligand>
</feature>
<feature type="binding site" evidence="4">
    <location>
        <position position="207"/>
    </location>
    <ligand>
        <name>Cu cation</name>
        <dbReference type="ChEBI" id="CHEBI:23378"/>
        <label>A1</label>
    </ligand>
</feature>
<feature type="modified residue" description="Phosphotyrosine" evidence="2">
    <location>
        <position position="218"/>
    </location>
</feature>